<feature type="chain" id="PRO_0000232204" description="ATP-dependent RNA helicase DBP4">
    <location>
        <begin position="1"/>
        <end position="740"/>
    </location>
</feature>
<feature type="domain" description="Helicase ATP-binding" evidence="2">
    <location>
        <begin position="70"/>
        <end position="244"/>
    </location>
</feature>
<feature type="domain" description="Helicase C-terminal" evidence="3">
    <location>
        <begin position="257"/>
        <end position="421"/>
    </location>
</feature>
<feature type="region of interest" description="Disordered" evidence="4">
    <location>
        <begin position="1"/>
        <end position="37"/>
    </location>
</feature>
<feature type="region of interest" description="Disordered" evidence="4">
    <location>
        <begin position="565"/>
        <end position="740"/>
    </location>
</feature>
<feature type="short sequence motif" description="Q motif">
    <location>
        <begin position="39"/>
        <end position="67"/>
    </location>
</feature>
<feature type="short sequence motif" description="DEAD box">
    <location>
        <begin position="192"/>
        <end position="195"/>
    </location>
</feature>
<feature type="compositionally biased region" description="Basic and acidic residues" evidence="4">
    <location>
        <begin position="7"/>
        <end position="28"/>
    </location>
</feature>
<feature type="compositionally biased region" description="Basic and acidic residues" evidence="4">
    <location>
        <begin position="636"/>
        <end position="662"/>
    </location>
</feature>
<feature type="compositionally biased region" description="Acidic residues" evidence="4">
    <location>
        <begin position="680"/>
        <end position="695"/>
    </location>
</feature>
<feature type="compositionally biased region" description="Acidic residues" evidence="4">
    <location>
        <begin position="709"/>
        <end position="731"/>
    </location>
</feature>
<feature type="binding site" evidence="2">
    <location>
        <begin position="83"/>
        <end position="90"/>
    </location>
    <ligand>
        <name>ATP</name>
        <dbReference type="ChEBI" id="CHEBI:30616"/>
    </ligand>
</feature>
<gene>
    <name type="primary">DBP4</name>
    <name type="ordered locus">YALI0A20328g</name>
</gene>
<evidence type="ECO:0000250" key="1"/>
<evidence type="ECO:0000255" key="2">
    <source>
        <dbReference type="PROSITE-ProRule" id="PRU00541"/>
    </source>
</evidence>
<evidence type="ECO:0000255" key="3">
    <source>
        <dbReference type="PROSITE-ProRule" id="PRU00542"/>
    </source>
</evidence>
<evidence type="ECO:0000256" key="4">
    <source>
        <dbReference type="SAM" id="MobiDB-lite"/>
    </source>
</evidence>
<evidence type="ECO:0000305" key="5"/>
<reference key="1">
    <citation type="journal article" date="2004" name="Nature">
        <title>Genome evolution in yeasts.</title>
        <authorList>
            <person name="Dujon B."/>
            <person name="Sherman D."/>
            <person name="Fischer G."/>
            <person name="Durrens P."/>
            <person name="Casaregola S."/>
            <person name="Lafontaine I."/>
            <person name="de Montigny J."/>
            <person name="Marck C."/>
            <person name="Neuveglise C."/>
            <person name="Talla E."/>
            <person name="Goffard N."/>
            <person name="Frangeul L."/>
            <person name="Aigle M."/>
            <person name="Anthouard V."/>
            <person name="Babour A."/>
            <person name="Barbe V."/>
            <person name="Barnay S."/>
            <person name="Blanchin S."/>
            <person name="Beckerich J.-M."/>
            <person name="Beyne E."/>
            <person name="Bleykasten C."/>
            <person name="Boisrame A."/>
            <person name="Boyer J."/>
            <person name="Cattolico L."/>
            <person name="Confanioleri F."/>
            <person name="de Daruvar A."/>
            <person name="Despons L."/>
            <person name="Fabre E."/>
            <person name="Fairhead C."/>
            <person name="Ferry-Dumazet H."/>
            <person name="Groppi A."/>
            <person name="Hantraye F."/>
            <person name="Hennequin C."/>
            <person name="Jauniaux N."/>
            <person name="Joyet P."/>
            <person name="Kachouri R."/>
            <person name="Kerrest A."/>
            <person name="Koszul R."/>
            <person name="Lemaire M."/>
            <person name="Lesur I."/>
            <person name="Ma L."/>
            <person name="Muller H."/>
            <person name="Nicaud J.-M."/>
            <person name="Nikolski M."/>
            <person name="Oztas S."/>
            <person name="Ozier-Kalogeropoulos O."/>
            <person name="Pellenz S."/>
            <person name="Potier S."/>
            <person name="Richard G.-F."/>
            <person name="Straub M.-L."/>
            <person name="Suleau A."/>
            <person name="Swennen D."/>
            <person name="Tekaia F."/>
            <person name="Wesolowski-Louvel M."/>
            <person name="Westhof E."/>
            <person name="Wirth B."/>
            <person name="Zeniou-Meyer M."/>
            <person name="Zivanovic Y."/>
            <person name="Bolotin-Fukuhara M."/>
            <person name="Thierry A."/>
            <person name="Bouchier C."/>
            <person name="Caudron B."/>
            <person name="Scarpelli C."/>
            <person name="Gaillardin C."/>
            <person name="Weissenbach J."/>
            <person name="Wincker P."/>
            <person name="Souciet J.-L."/>
        </authorList>
    </citation>
    <scope>NUCLEOTIDE SEQUENCE [LARGE SCALE GENOMIC DNA]</scope>
    <source>
        <strain>CLIB 122 / E 150</strain>
    </source>
</reference>
<keyword id="KW-0067">ATP-binding</keyword>
<keyword id="KW-0347">Helicase</keyword>
<keyword id="KW-0378">Hydrolase</keyword>
<keyword id="KW-0547">Nucleotide-binding</keyword>
<keyword id="KW-0539">Nucleus</keyword>
<keyword id="KW-1185">Reference proteome</keyword>
<keyword id="KW-0690">Ribosome biogenesis</keyword>
<keyword id="KW-0694">RNA-binding</keyword>
<keyword id="KW-0698">rRNA processing</keyword>
<sequence>MKKRADPRKIKREEHKQKLSKLQERVDNFGEDEADKEVSKFEELPLSEATIEGLKNSHYVTCTDVQKRAIPPALQGHDLLGAARTGSGKTLAFLVPVLECLFRNKWSDVDGLGALVISPTRELAVQIFQVLRKIGRCHSFSAGLVIGGKDVAMEADRLAKLNILICTPGRLLQHMDQTSGFDLSNVKMLVLDEADRILDMGFKKTMDAILENLPVDRQTLLFSATQTKSVSDLARLSLADPKYISANPDTTSSTPKNLEQNYVCVELQDKLDTLWGFLRTHTKFKIIVFFSSSKQVRYVYETFRTLQPGIPLLHLHGKQKQGARMDVVSKFSKASSSCLFATDIVARGIDFPAVHWVVQVDCPEDAATYIHRVGRSARFGKSGKALLFLTPTEEPAMIQRLEAKHIPINKLTIRPNKKKSIKNQLQALCFKSPEIKYLGQKAFISYYKSIFIQKDKEIFQFEKIPSEAFAESLGLPGAPQIKLGKSAEKMKEEANAKKNQSRALQKLMRAGDDGVVSDDEKEVRTKMDRMFERKNQNVLSDHYLNMVKGDADEDEETGDFMTVKRQDHNLESDDDEDIANLPTSKRAAKQALSKKQSLKNKGLGTKTLFDDEGAPHALYEFDDEEDFKAAGPVESQVKEFVDRETKDMEEADVGDKELVKQKRAEKKRKRKEIERLRELDEYDEESEEEGDSEEEQAAKKPKWFQRDESSDEEEDDGVLEVEEPTTLEDLESLTSKLLKK</sequence>
<protein>
    <recommendedName>
        <fullName>ATP-dependent RNA helicase DBP4</fullName>
        <ecNumber>3.6.4.13</ecNumber>
    </recommendedName>
</protein>
<comment type="function">
    <text evidence="1">ATP-dependent RNA helicase required for ribosome biogenesis. Involved in the release of U14 snoRNA in pre-ribosomal complexes. Required for pre-rRNA cleavage at site A2 (By similarity).</text>
</comment>
<comment type="catalytic activity">
    <reaction>
        <text>ATP + H2O = ADP + phosphate + H(+)</text>
        <dbReference type="Rhea" id="RHEA:13065"/>
        <dbReference type="ChEBI" id="CHEBI:15377"/>
        <dbReference type="ChEBI" id="CHEBI:15378"/>
        <dbReference type="ChEBI" id="CHEBI:30616"/>
        <dbReference type="ChEBI" id="CHEBI:43474"/>
        <dbReference type="ChEBI" id="CHEBI:456216"/>
        <dbReference type="EC" id="3.6.4.13"/>
    </reaction>
</comment>
<comment type="subunit">
    <text evidence="1">Interacts with the U3 and U14 snoRNAs. Associates with pre-ribosomal complexes (By similarity).</text>
</comment>
<comment type="subcellular location">
    <subcellularLocation>
        <location evidence="1">Nucleus</location>
        <location evidence="1">Nucleolus</location>
    </subcellularLocation>
</comment>
<comment type="domain">
    <text>The Q motif is unique to and characteristic of the DEAD box family of RNA helicases and controls ATP binding and hydrolysis.</text>
</comment>
<comment type="similarity">
    <text evidence="5">Belongs to the DEAD box helicase family. DDX10/DBP4 subfamily.</text>
</comment>
<name>DBP4_YARLI</name>
<proteinExistence type="inferred from homology"/>
<dbReference type="EC" id="3.6.4.13"/>
<dbReference type="EMBL" id="CR382127">
    <property type="protein sequence ID" value="CAG84219.1"/>
    <property type="molecule type" value="Genomic_DNA"/>
</dbReference>
<dbReference type="RefSeq" id="XP_500281.1">
    <property type="nucleotide sequence ID" value="XM_500281.1"/>
</dbReference>
<dbReference type="SMR" id="Q6CGD1"/>
<dbReference type="FunCoup" id="Q6CGD1">
    <property type="interactions" value="1086"/>
</dbReference>
<dbReference type="STRING" id="284591.Q6CGD1"/>
<dbReference type="EnsemblFungi" id="CAG84219">
    <property type="protein sequence ID" value="CAG84219"/>
    <property type="gene ID" value="YALI0_A20328g"/>
</dbReference>
<dbReference type="KEGG" id="yli:2906391"/>
<dbReference type="VEuPathDB" id="FungiDB:YALI0_A20328g"/>
<dbReference type="HOGENOM" id="CLU_003041_26_1_1"/>
<dbReference type="InParanoid" id="Q6CGD1"/>
<dbReference type="OMA" id="YDKMFER"/>
<dbReference type="OrthoDB" id="119648at4891"/>
<dbReference type="Proteomes" id="UP000001300">
    <property type="component" value="Chromosome A"/>
</dbReference>
<dbReference type="GO" id="GO:0005730">
    <property type="term" value="C:nucleolus"/>
    <property type="evidence" value="ECO:0007669"/>
    <property type="project" value="UniProtKB-SubCell"/>
</dbReference>
<dbReference type="GO" id="GO:0005634">
    <property type="term" value="C:nucleus"/>
    <property type="evidence" value="ECO:0000318"/>
    <property type="project" value="GO_Central"/>
</dbReference>
<dbReference type="GO" id="GO:0005524">
    <property type="term" value="F:ATP binding"/>
    <property type="evidence" value="ECO:0007669"/>
    <property type="project" value="UniProtKB-KW"/>
</dbReference>
<dbReference type="GO" id="GO:0016887">
    <property type="term" value="F:ATP hydrolysis activity"/>
    <property type="evidence" value="ECO:0007669"/>
    <property type="project" value="RHEA"/>
</dbReference>
<dbReference type="GO" id="GO:0003723">
    <property type="term" value="F:RNA binding"/>
    <property type="evidence" value="ECO:0007669"/>
    <property type="project" value="UniProtKB-KW"/>
</dbReference>
<dbReference type="GO" id="GO:0003724">
    <property type="term" value="F:RNA helicase activity"/>
    <property type="evidence" value="ECO:0007669"/>
    <property type="project" value="UniProtKB-EC"/>
</dbReference>
<dbReference type="GO" id="GO:0006364">
    <property type="term" value="P:rRNA processing"/>
    <property type="evidence" value="ECO:0000318"/>
    <property type="project" value="GO_Central"/>
</dbReference>
<dbReference type="CDD" id="cd17941">
    <property type="entry name" value="DEADc_DDX10"/>
    <property type="match status" value="1"/>
</dbReference>
<dbReference type="CDD" id="cd18787">
    <property type="entry name" value="SF2_C_DEAD"/>
    <property type="match status" value="1"/>
</dbReference>
<dbReference type="Gene3D" id="3.40.50.300">
    <property type="entry name" value="P-loop containing nucleotide triphosphate hydrolases"/>
    <property type="match status" value="2"/>
</dbReference>
<dbReference type="InterPro" id="IPR011545">
    <property type="entry name" value="DEAD/DEAH_box_helicase_dom"/>
</dbReference>
<dbReference type="InterPro" id="IPR014001">
    <property type="entry name" value="Helicase_ATP-bd"/>
</dbReference>
<dbReference type="InterPro" id="IPR001650">
    <property type="entry name" value="Helicase_C-like"/>
</dbReference>
<dbReference type="InterPro" id="IPR027417">
    <property type="entry name" value="P-loop_NTPase"/>
</dbReference>
<dbReference type="InterPro" id="IPR000629">
    <property type="entry name" value="RNA-helicase_DEAD-box_CS"/>
</dbReference>
<dbReference type="InterPro" id="IPR014014">
    <property type="entry name" value="RNA_helicase_DEAD_Q_motif"/>
</dbReference>
<dbReference type="InterPro" id="IPR025313">
    <property type="entry name" value="SPB4-like_CTE"/>
</dbReference>
<dbReference type="PANTHER" id="PTHR24031">
    <property type="entry name" value="RNA HELICASE"/>
    <property type="match status" value="1"/>
</dbReference>
<dbReference type="Pfam" id="PF13959">
    <property type="entry name" value="CTE_SPB4"/>
    <property type="match status" value="1"/>
</dbReference>
<dbReference type="Pfam" id="PF00270">
    <property type="entry name" value="DEAD"/>
    <property type="match status" value="1"/>
</dbReference>
<dbReference type="Pfam" id="PF00271">
    <property type="entry name" value="Helicase_C"/>
    <property type="match status" value="1"/>
</dbReference>
<dbReference type="SMART" id="SM00487">
    <property type="entry name" value="DEXDc"/>
    <property type="match status" value="1"/>
</dbReference>
<dbReference type="SMART" id="SM01178">
    <property type="entry name" value="DUF4217"/>
    <property type="match status" value="1"/>
</dbReference>
<dbReference type="SMART" id="SM00490">
    <property type="entry name" value="HELICc"/>
    <property type="match status" value="1"/>
</dbReference>
<dbReference type="SUPFAM" id="SSF52540">
    <property type="entry name" value="P-loop containing nucleoside triphosphate hydrolases"/>
    <property type="match status" value="1"/>
</dbReference>
<dbReference type="PROSITE" id="PS00039">
    <property type="entry name" value="DEAD_ATP_HELICASE"/>
    <property type="match status" value="1"/>
</dbReference>
<dbReference type="PROSITE" id="PS51192">
    <property type="entry name" value="HELICASE_ATP_BIND_1"/>
    <property type="match status" value="1"/>
</dbReference>
<dbReference type="PROSITE" id="PS51194">
    <property type="entry name" value="HELICASE_CTER"/>
    <property type="match status" value="1"/>
</dbReference>
<dbReference type="PROSITE" id="PS51195">
    <property type="entry name" value="Q_MOTIF"/>
    <property type="match status" value="1"/>
</dbReference>
<accession>Q6CGD1</accession>
<organism>
    <name type="scientific">Yarrowia lipolytica (strain CLIB 122 / E 150)</name>
    <name type="common">Yeast</name>
    <name type="synonym">Candida lipolytica</name>
    <dbReference type="NCBI Taxonomy" id="284591"/>
    <lineage>
        <taxon>Eukaryota</taxon>
        <taxon>Fungi</taxon>
        <taxon>Dikarya</taxon>
        <taxon>Ascomycota</taxon>
        <taxon>Saccharomycotina</taxon>
        <taxon>Dipodascomycetes</taxon>
        <taxon>Dipodascales</taxon>
        <taxon>Dipodascales incertae sedis</taxon>
        <taxon>Yarrowia</taxon>
    </lineage>
</organism>